<proteinExistence type="inferred from homology"/>
<comment type="function">
    <text evidence="1">Transport of potassium into the cell. Likely operates as a K(+):H(+) symporter.</text>
</comment>
<comment type="catalytic activity">
    <reaction evidence="1">
        <text>K(+)(in) + H(+)(in) = K(+)(out) + H(+)(out)</text>
        <dbReference type="Rhea" id="RHEA:28490"/>
        <dbReference type="ChEBI" id="CHEBI:15378"/>
        <dbReference type="ChEBI" id="CHEBI:29103"/>
    </reaction>
    <physiologicalReaction direction="right-to-left" evidence="1">
        <dbReference type="Rhea" id="RHEA:28492"/>
    </physiologicalReaction>
</comment>
<comment type="subcellular location">
    <subcellularLocation>
        <location evidence="1">Cell inner membrane</location>
        <topology evidence="1">Multi-pass membrane protein</topology>
    </subcellularLocation>
</comment>
<comment type="similarity">
    <text evidence="1">Belongs to the HAK/KUP transporter (TC 2.A.72) family.</text>
</comment>
<evidence type="ECO:0000255" key="1">
    <source>
        <dbReference type="HAMAP-Rule" id="MF_01522"/>
    </source>
</evidence>
<gene>
    <name evidence="1" type="primary">kup2</name>
    <name type="ordered locus">AHA_2498</name>
</gene>
<accession>A0KL61</accession>
<feature type="chain" id="PRO_0000279764" description="Probable potassium transport system protein Kup 2">
    <location>
        <begin position="1"/>
        <end position="622"/>
    </location>
</feature>
<feature type="transmembrane region" description="Helical" evidence="1">
    <location>
        <begin position="9"/>
        <end position="29"/>
    </location>
</feature>
<feature type="transmembrane region" description="Helical" evidence="1">
    <location>
        <begin position="46"/>
        <end position="66"/>
    </location>
</feature>
<feature type="transmembrane region" description="Helical" evidence="1">
    <location>
        <begin position="99"/>
        <end position="119"/>
    </location>
</feature>
<feature type="transmembrane region" description="Helical" evidence="1">
    <location>
        <begin position="137"/>
        <end position="157"/>
    </location>
</feature>
<feature type="transmembrane region" description="Helical" evidence="1">
    <location>
        <begin position="169"/>
        <end position="189"/>
    </location>
</feature>
<feature type="transmembrane region" description="Helical" evidence="1">
    <location>
        <begin position="213"/>
        <end position="233"/>
    </location>
</feature>
<feature type="transmembrane region" description="Helical" evidence="1">
    <location>
        <begin position="247"/>
        <end position="267"/>
    </location>
</feature>
<feature type="transmembrane region" description="Helical" evidence="1">
    <location>
        <begin position="285"/>
        <end position="305"/>
    </location>
</feature>
<feature type="transmembrane region" description="Helical" evidence="1">
    <location>
        <begin position="337"/>
        <end position="357"/>
    </location>
</feature>
<feature type="transmembrane region" description="Helical" evidence="1">
    <location>
        <begin position="363"/>
        <end position="383"/>
    </location>
</feature>
<feature type="transmembrane region" description="Helical" evidence="1">
    <location>
        <begin position="396"/>
        <end position="416"/>
    </location>
</feature>
<feature type="transmembrane region" description="Helical" evidence="1">
    <location>
        <begin position="419"/>
        <end position="439"/>
    </location>
</feature>
<protein>
    <recommendedName>
        <fullName evidence="1">Probable potassium transport system protein Kup 2</fullName>
    </recommendedName>
</protein>
<name>KUP2_AERHH</name>
<keyword id="KW-0997">Cell inner membrane</keyword>
<keyword id="KW-1003">Cell membrane</keyword>
<keyword id="KW-0406">Ion transport</keyword>
<keyword id="KW-0472">Membrane</keyword>
<keyword id="KW-0630">Potassium</keyword>
<keyword id="KW-0633">Potassium transport</keyword>
<keyword id="KW-1185">Reference proteome</keyword>
<keyword id="KW-0769">Symport</keyword>
<keyword id="KW-0812">Transmembrane</keyword>
<keyword id="KW-1133">Transmembrane helix</keyword>
<keyword id="KW-0813">Transport</keyword>
<dbReference type="EMBL" id="CP000462">
    <property type="protein sequence ID" value="ABK39767.1"/>
    <property type="molecule type" value="Genomic_DNA"/>
</dbReference>
<dbReference type="RefSeq" id="YP_857012.1">
    <property type="nucleotide sequence ID" value="NC_008570.1"/>
</dbReference>
<dbReference type="STRING" id="380703.AHA_2498"/>
<dbReference type="EnsemblBacteria" id="ABK39767">
    <property type="protein sequence ID" value="ABK39767"/>
    <property type="gene ID" value="AHA_2498"/>
</dbReference>
<dbReference type="GeneID" id="4490799"/>
<dbReference type="KEGG" id="aha:AHA_2498"/>
<dbReference type="PATRIC" id="fig|380703.7.peg.2498"/>
<dbReference type="eggNOG" id="COG3158">
    <property type="taxonomic scope" value="Bacteria"/>
</dbReference>
<dbReference type="HOGENOM" id="CLU_008142_4_2_6"/>
<dbReference type="OrthoDB" id="9805577at2"/>
<dbReference type="Proteomes" id="UP000000756">
    <property type="component" value="Chromosome"/>
</dbReference>
<dbReference type="GO" id="GO:0005886">
    <property type="term" value="C:plasma membrane"/>
    <property type="evidence" value="ECO:0007669"/>
    <property type="project" value="UniProtKB-SubCell"/>
</dbReference>
<dbReference type="GO" id="GO:0015079">
    <property type="term" value="F:potassium ion transmembrane transporter activity"/>
    <property type="evidence" value="ECO:0007669"/>
    <property type="project" value="UniProtKB-UniRule"/>
</dbReference>
<dbReference type="GO" id="GO:0015293">
    <property type="term" value="F:symporter activity"/>
    <property type="evidence" value="ECO:0007669"/>
    <property type="project" value="UniProtKB-UniRule"/>
</dbReference>
<dbReference type="HAMAP" id="MF_01522">
    <property type="entry name" value="Kup"/>
    <property type="match status" value="1"/>
</dbReference>
<dbReference type="InterPro" id="IPR003855">
    <property type="entry name" value="K+_transporter"/>
</dbReference>
<dbReference type="InterPro" id="IPR053952">
    <property type="entry name" value="K_trans_C"/>
</dbReference>
<dbReference type="InterPro" id="IPR053951">
    <property type="entry name" value="K_trans_N"/>
</dbReference>
<dbReference type="InterPro" id="IPR023051">
    <property type="entry name" value="Kup"/>
</dbReference>
<dbReference type="NCBIfam" id="TIGR00794">
    <property type="entry name" value="kup"/>
    <property type="match status" value="1"/>
</dbReference>
<dbReference type="NCBIfam" id="NF008015">
    <property type="entry name" value="PRK10745.1"/>
    <property type="match status" value="1"/>
</dbReference>
<dbReference type="PANTHER" id="PTHR30540:SF79">
    <property type="entry name" value="LOW AFFINITY POTASSIUM TRANSPORT SYSTEM PROTEIN KUP"/>
    <property type="match status" value="1"/>
</dbReference>
<dbReference type="PANTHER" id="PTHR30540">
    <property type="entry name" value="OSMOTIC STRESS POTASSIUM TRANSPORTER"/>
    <property type="match status" value="1"/>
</dbReference>
<dbReference type="Pfam" id="PF02705">
    <property type="entry name" value="K_trans"/>
    <property type="match status" value="1"/>
</dbReference>
<dbReference type="Pfam" id="PF22776">
    <property type="entry name" value="K_trans_C"/>
    <property type="match status" value="1"/>
</dbReference>
<organism>
    <name type="scientific">Aeromonas hydrophila subsp. hydrophila (strain ATCC 7966 / DSM 30187 / BCRC 13018 / CCUG 14551 / JCM 1027 / KCTC 2358 / NCIMB 9240 / NCTC 8049)</name>
    <dbReference type="NCBI Taxonomy" id="380703"/>
    <lineage>
        <taxon>Bacteria</taxon>
        <taxon>Pseudomonadati</taxon>
        <taxon>Pseudomonadota</taxon>
        <taxon>Gammaproteobacteria</taxon>
        <taxon>Aeromonadales</taxon>
        <taxon>Aeromonadaceae</taxon>
        <taxon>Aeromonas</taxon>
    </lineage>
</organism>
<sequence>MNGNHKQALSGVTLAAIGVVYGDIGTSPLYTLRECLSGQFGFGVEPASILGFLSLIFWLLILVVSVKYLSFVMRADNAGEGGILTLMSLATRNTPAKWTPLLIILGLIGGSFFYGEVVITPAMSVMSAIEGLNIAAPSLDPYIVPLSVLVLTLLFAIQKHGTATVGKLFAPIMLTWFITLAVLGLNSIFQHPEVLGALNPVWALRFFAKYQTASFFALGAVVLAITGVEALYADMGHFGKSPIRRAWFMVVLPSLVLNYFGQGALLLAHPEAITNPFFLLAPKWALLPLLLLATLATVIASQAVISGVFSLTRQAVRLGYLSPIRIVHTSEQESGQIYIPVINWMLYISVVIVIMSFEHSSNLAAAYGIAVTGTMVLTSILSCSVARHSWHWNKYLVAALFVALLAIDVPLFAANLAKIFSGGWLPLTLGAVMFTVMTSWKSERFQLIRRLNEHGNSLEPMIASLEKSPPTRVAGTAVYMSRVVNVIPHALLHNLKHNKVLHERIILLTLRVEEVPYVHNVRRVCIEQLSPTFWRVVASYGWRETPNVEEIFHRCNAEGLSCRMMETSFFMAHESLIMKERPWYLYLRGKLFMLLQRNALRAPDQFEIPPNRVIELGSQVDI</sequence>
<reference key="1">
    <citation type="journal article" date="2006" name="J. Bacteriol.">
        <title>Genome sequence of Aeromonas hydrophila ATCC 7966T: jack of all trades.</title>
        <authorList>
            <person name="Seshadri R."/>
            <person name="Joseph S.W."/>
            <person name="Chopra A.K."/>
            <person name="Sha J."/>
            <person name="Shaw J."/>
            <person name="Graf J."/>
            <person name="Haft D.H."/>
            <person name="Wu M."/>
            <person name="Ren Q."/>
            <person name="Rosovitz M.J."/>
            <person name="Madupu R."/>
            <person name="Tallon L."/>
            <person name="Kim M."/>
            <person name="Jin S."/>
            <person name="Vuong H."/>
            <person name="Stine O.C."/>
            <person name="Ali A."/>
            <person name="Horneman A.J."/>
            <person name="Heidelberg J.F."/>
        </authorList>
    </citation>
    <scope>NUCLEOTIDE SEQUENCE [LARGE SCALE GENOMIC DNA]</scope>
    <source>
        <strain>ATCC 7966 / DSM 30187 / BCRC 13018 / CCUG 14551 / JCM 1027 / KCTC 2358 / NCIMB 9240 / NCTC 8049</strain>
    </source>
</reference>